<gene>
    <name evidence="1" type="primary">hisE</name>
    <name type="ordered locus">NGR_c33990</name>
</gene>
<protein>
    <recommendedName>
        <fullName evidence="1">Phosphoribosyl-ATP pyrophosphatase</fullName>
        <shortName evidence="1">PRA-PH</shortName>
        <ecNumber evidence="1">3.6.1.31</ecNumber>
    </recommendedName>
</protein>
<accession>C3MBC0</accession>
<keyword id="KW-0028">Amino-acid biosynthesis</keyword>
<keyword id="KW-0067">ATP-binding</keyword>
<keyword id="KW-0963">Cytoplasm</keyword>
<keyword id="KW-0368">Histidine biosynthesis</keyword>
<keyword id="KW-0378">Hydrolase</keyword>
<keyword id="KW-0547">Nucleotide-binding</keyword>
<keyword id="KW-1185">Reference proteome</keyword>
<dbReference type="EC" id="3.6.1.31" evidence="1"/>
<dbReference type="EMBL" id="CP001389">
    <property type="protein sequence ID" value="ACP27129.1"/>
    <property type="molecule type" value="Genomic_DNA"/>
</dbReference>
<dbReference type="RefSeq" id="WP_012709876.1">
    <property type="nucleotide sequence ID" value="NC_012587.1"/>
</dbReference>
<dbReference type="RefSeq" id="YP_002827882.1">
    <property type="nucleotide sequence ID" value="NC_012587.1"/>
</dbReference>
<dbReference type="SMR" id="C3MBC0"/>
<dbReference type="STRING" id="394.NGR_c33990"/>
<dbReference type="KEGG" id="rhi:NGR_c33990"/>
<dbReference type="PATRIC" id="fig|394.7.peg.6248"/>
<dbReference type="eggNOG" id="COG0140">
    <property type="taxonomic scope" value="Bacteria"/>
</dbReference>
<dbReference type="HOGENOM" id="CLU_123337_1_1_5"/>
<dbReference type="OrthoDB" id="9814738at2"/>
<dbReference type="UniPathway" id="UPA00031">
    <property type="reaction ID" value="UER00007"/>
</dbReference>
<dbReference type="Proteomes" id="UP000001054">
    <property type="component" value="Chromosome"/>
</dbReference>
<dbReference type="GO" id="GO:0005737">
    <property type="term" value="C:cytoplasm"/>
    <property type="evidence" value="ECO:0007669"/>
    <property type="project" value="UniProtKB-SubCell"/>
</dbReference>
<dbReference type="GO" id="GO:0005524">
    <property type="term" value="F:ATP binding"/>
    <property type="evidence" value="ECO:0007669"/>
    <property type="project" value="UniProtKB-KW"/>
</dbReference>
<dbReference type="GO" id="GO:0004636">
    <property type="term" value="F:phosphoribosyl-ATP diphosphatase activity"/>
    <property type="evidence" value="ECO:0007669"/>
    <property type="project" value="UniProtKB-UniRule"/>
</dbReference>
<dbReference type="GO" id="GO:0000105">
    <property type="term" value="P:L-histidine biosynthetic process"/>
    <property type="evidence" value="ECO:0007669"/>
    <property type="project" value="UniProtKB-UniRule"/>
</dbReference>
<dbReference type="CDD" id="cd11534">
    <property type="entry name" value="NTP-PPase_HisIE_like"/>
    <property type="match status" value="1"/>
</dbReference>
<dbReference type="Gene3D" id="1.10.287.1080">
    <property type="entry name" value="MazG-like"/>
    <property type="match status" value="1"/>
</dbReference>
<dbReference type="HAMAP" id="MF_01020">
    <property type="entry name" value="HisE"/>
    <property type="match status" value="1"/>
</dbReference>
<dbReference type="InterPro" id="IPR008179">
    <property type="entry name" value="HisE"/>
</dbReference>
<dbReference type="InterPro" id="IPR021130">
    <property type="entry name" value="PRib-ATP_PPHydrolase-like"/>
</dbReference>
<dbReference type="NCBIfam" id="TIGR03188">
    <property type="entry name" value="histidine_hisI"/>
    <property type="match status" value="1"/>
</dbReference>
<dbReference type="NCBIfam" id="NF001611">
    <property type="entry name" value="PRK00400.1-3"/>
    <property type="match status" value="1"/>
</dbReference>
<dbReference type="NCBIfam" id="NF001613">
    <property type="entry name" value="PRK00400.1-5"/>
    <property type="match status" value="1"/>
</dbReference>
<dbReference type="PANTHER" id="PTHR42945">
    <property type="entry name" value="HISTIDINE BIOSYNTHESIS BIFUNCTIONAL PROTEIN"/>
    <property type="match status" value="1"/>
</dbReference>
<dbReference type="PANTHER" id="PTHR42945:SF9">
    <property type="entry name" value="HISTIDINE BIOSYNTHESIS BIFUNCTIONAL PROTEIN HISIE"/>
    <property type="match status" value="1"/>
</dbReference>
<dbReference type="Pfam" id="PF01503">
    <property type="entry name" value="PRA-PH"/>
    <property type="match status" value="1"/>
</dbReference>
<dbReference type="SUPFAM" id="SSF101386">
    <property type="entry name" value="all-alpha NTP pyrophosphatases"/>
    <property type="match status" value="1"/>
</dbReference>
<evidence type="ECO:0000255" key="1">
    <source>
        <dbReference type="HAMAP-Rule" id="MF_01020"/>
    </source>
</evidence>
<organism>
    <name type="scientific">Sinorhizobium fredii (strain NBRC 101917 / NGR234)</name>
    <dbReference type="NCBI Taxonomy" id="394"/>
    <lineage>
        <taxon>Bacteria</taxon>
        <taxon>Pseudomonadati</taxon>
        <taxon>Pseudomonadota</taxon>
        <taxon>Alphaproteobacteria</taxon>
        <taxon>Hyphomicrobiales</taxon>
        <taxon>Rhizobiaceae</taxon>
        <taxon>Sinorhizobium/Ensifer group</taxon>
        <taxon>Sinorhizobium</taxon>
    </lineage>
</organism>
<sequence>MTELTLSDLEQIVATRAGAAPEDSWTAKLVAAGQPKAAKKLGEEAVETVIAAVSGDRKNLIDESADLLYHLMVVLNIAAVPLQDVMSELARRTSQSGLQEKANRQNP</sequence>
<name>HIS2_SINFN</name>
<comment type="catalytic activity">
    <reaction evidence="1">
        <text>1-(5-phospho-beta-D-ribosyl)-ATP + H2O = 1-(5-phospho-beta-D-ribosyl)-5'-AMP + diphosphate + H(+)</text>
        <dbReference type="Rhea" id="RHEA:22828"/>
        <dbReference type="ChEBI" id="CHEBI:15377"/>
        <dbReference type="ChEBI" id="CHEBI:15378"/>
        <dbReference type="ChEBI" id="CHEBI:33019"/>
        <dbReference type="ChEBI" id="CHEBI:59457"/>
        <dbReference type="ChEBI" id="CHEBI:73183"/>
        <dbReference type="EC" id="3.6.1.31"/>
    </reaction>
</comment>
<comment type="pathway">
    <text evidence="1">Amino-acid biosynthesis; L-histidine biosynthesis; L-histidine from 5-phospho-alpha-D-ribose 1-diphosphate: step 2/9.</text>
</comment>
<comment type="subcellular location">
    <subcellularLocation>
        <location evidence="1">Cytoplasm</location>
    </subcellularLocation>
</comment>
<comment type="similarity">
    <text evidence="1">Belongs to the PRA-PH family.</text>
</comment>
<reference key="1">
    <citation type="journal article" date="2009" name="Appl. Environ. Microbiol.">
        <title>Rhizobium sp. strain NGR234 possesses a remarkable number of secretion systems.</title>
        <authorList>
            <person name="Schmeisser C."/>
            <person name="Liesegang H."/>
            <person name="Krysciak D."/>
            <person name="Bakkou N."/>
            <person name="Le Quere A."/>
            <person name="Wollherr A."/>
            <person name="Heinemeyer I."/>
            <person name="Morgenstern B."/>
            <person name="Pommerening-Roeser A."/>
            <person name="Flores M."/>
            <person name="Palacios R."/>
            <person name="Brenner S."/>
            <person name="Gottschalk G."/>
            <person name="Schmitz R.A."/>
            <person name="Broughton W.J."/>
            <person name="Perret X."/>
            <person name="Strittmatter A.W."/>
            <person name="Streit W.R."/>
        </authorList>
    </citation>
    <scope>NUCLEOTIDE SEQUENCE [LARGE SCALE GENOMIC DNA]</scope>
    <source>
        <strain>NBRC 101917 / NGR234</strain>
    </source>
</reference>
<proteinExistence type="inferred from homology"/>
<feature type="chain" id="PRO_1000149058" description="Phosphoribosyl-ATP pyrophosphatase">
    <location>
        <begin position="1"/>
        <end position="107"/>
    </location>
</feature>